<name>RF1_RICCK</name>
<keyword id="KW-0963">Cytoplasm</keyword>
<keyword id="KW-0488">Methylation</keyword>
<keyword id="KW-0648">Protein biosynthesis</keyword>
<accession>A8EYR1</accession>
<sequence length="355" mass="39740">MSFSDNLAKIVDKYENLGKKLSSGIMGDEFVKASKEYAELEEVVEKIKEYNKAKSELEEANNFKLEVGLDNATLEMIEDEIHTLENSLPKLERAVKIALLPKDEADSKSAIIEVRAGSGGEEAALFAAILFNMYQRYAELKGWHFEILAIVDTGIGGYKEASASIKGKDVFSKLKCESGVHRVQRIPETESHGRIHTSAATVAVLPEVEDVDIKLEDKDLRIDTYRSSGAGGQHVNTTNSAVRITHIPTGITVALQDEKSQHKNKAKALKILRARIYEEERRKKEQKRANNRRGQVGSGDRSERIRTYNFPQGRVSDHRINLTLYKIDEVVKNGQLDEFVDALIADDEAKKLAEI</sequence>
<protein>
    <recommendedName>
        <fullName evidence="1">Peptide chain release factor 1</fullName>
        <shortName evidence="1">RF-1</shortName>
    </recommendedName>
</protein>
<comment type="function">
    <text evidence="1">Peptide chain release factor 1 directs the termination of translation in response to the peptide chain termination codons UAG and UAA.</text>
</comment>
<comment type="subcellular location">
    <subcellularLocation>
        <location evidence="1">Cytoplasm</location>
    </subcellularLocation>
</comment>
<comment type="PTM">
    <text evidence="1">Methylated by PrmC. Methylation increases the termination efficiency of RF1.</text>
</comment>
<comment type="similarity">
    <text evidence="1">Belongs to the prokaryotic/mitochondrial release factor family.</text>
</comment>
<organism>
    <name type="scientific">Rickettsia canadensis (strain McKiel)</name>
    <dbReference type="NCBI Taxonomy" id="293613"/>
    <lineage>
        <taxon>Bacteria</taxon>
        <taxon>Pseudomonadati</taxon>
        <taxon>Pseudomonadota</taxon>
        <taxon>Alphaproteobacteria</taxon>
        <taxon>Rickettsiales</taxon>
        <taxon>Rickettsiaceae</taxon>
        <taxon>Rickettsieae</taxon>
        <taxon>Rickettsia</taxon>
        <taxon>belli group</taxon>
    </lineage>
</organism>
<feature type="chain" id="PRO_1000004943" description="Peptide chain release factor 1">
    <location>
        <begin position="1"/>
        <end position="355"/>
    </location>
</feature>
<feature type="region of interest" description="Disordered" evidence="2">
    <location>
        <begin position="280"/>
        <end position="310"/>
    </location>
</feature>
<feature type="modified residue" description="N5-methylglutamine" evidence="1">
    <location>
        <position position="233"/>
    </location>
</feature>
<proteinExistence type="inferred from homology"/>
<gene>
    <name evidence="1" type="primary">prfA</name>
    <name type="ordered locus">A1E_02750</name>
</gene>
<dbReference type="EMBL" id="CP000409">
    <property type="protein sequence ID" value="ABV73494.1"/>
    <property type="molecule type" value="Genomic_DNA"/>
</dbReference>
<dbReference type="RefSeq" id="WP_012148691.1">
    <property type="nucleotide sequence ID" value="NC_009879.1"/>
</dbReference>
<dbReference type="SMR" id="A8EYR1"/>
<dbReference type="STRING" id="293613.A1E_02750"/>
<dbReference type="KEGG" id="rcm:A1E_02750"/>
<dbReference type="eggNOG" id="COG0216">
    <property type="taxonomic scope" value="Bacteria"/>
</dbReference>
<dbReference type="HOGENOM" id="CLU_036856_0_1_5"/>
<dbReference type="Proteomes" id="UP000007056">
    <property type="component" value="Chromosome"/>
</dbReference>
<dbReference type="GO" id="GO:0005737">
    <property type="term" value="C:cytoplasm"/>
    <property type="evidence" value="ECO:0007669"/>
    <property type="project" value="UniProtKB-SubCell"/>
</dbReference>
<dbReference type="GO" id="GO:0016149">
    <property type="term" value="F:translation release factor activity, codon specific"/>
    <property type="evidence" value="ECO:0007669"/>
    <property type="project" value="UniProtKB-UniRule"/>
</dbReference>
<dbReference type="FunFam" id="3.30.160.20:FF:000004">
    <property type="entry name" value="Peptide chain release factor 1"/>
    <property type="match status" value="1"/>
</dbReference>
<dbReference type="FunFam" id="3.30.70.1660:FF:000002">
    <property type="entry name" value="Peptide chain release factor 1"/>
    <property type="match status" value="1"/>
</dbReference>
<dbReference type="FunFam" id="3.30.70.1660:FF:000004">
    <property type="entry name" value="Peptide chain release factor 1"/>
    <property type="match status" value="1"/>
</dbReference>
<dbReference type="Gene3D" id="3.30.160.20">
    <property type="match status" value="1"/>
</dbReference>
<dbReference type="Gene3D" id="3.30.70.1660">
    <property type="match status" value="1"/>
</dbReference>
<dbReference type="Gene3D" id="6.10.140.1950">
    <property type="match status" value="1"/>
</dbReference>
<dbReference type="HAMAP" id="MF_00093">
    <property type="entry name" value="Rel_fac_1"/>
    <property type="match status" value="1"/>
</dbReference>
<dbReference type="InterPro" id="IPR005139">
    <property type="entry name" value="PCRF"/>
</dbReference>
<dbReference type="InterPro" id="IPR000352">
    <property type="entry name" value="Pep_chain_release_fac_I"/>
</dbReference>
<dbReference type="InterPro" id="IPR045853">
    <property type="entry name" value="Pep_chain_release_fac_I_sf"/>
</dbReference>
<dbReference type="InterPro" id="IPR050057">
    <property type="entry name" value="Prokaryotic/Mito_RF"/>
</dbReference>
<dbReference type="InterPro" id="IPR004373">
    <property type="entry name" value="RF-1"/>
</dbReference>
<dbReference type="NCBIfam" id="TIGR00019">
    <property type="entry name" value="prfA"/>
    <property type="match status" value="1"/>
</dbReference>
<dbReference type="NCBIfam" id="NF001859">
    <property type="entry name" value="PRK00591.1"/>
    <property type="match status" value="1"/>
</dbReference>
<dbReference type="PANTHER" id="PTHR43804">
    <property type="entry name" value="LD18447P"/>
    <property type="match status" value="1"/>
</dbReference>
<dbReference type="PANTHER" id="PTHR43804:SF7">
    <property type="entry name" value="LD18447P"/>
    <property type="match status" value="1"/>
</dbReference>
<dbReference type="Pfam" id="PF03462">
    <property type="entry name" value="PCRF"/>
    <property type="match status" value="1"/>
</dbReference>
<dbReference type="Pfam" id="PF00472">
    <property type="entry name" value="RF-1"/>
    <property type="match status" value="1"/>
</dbReference>
<dbReference type="SMART" id="SM00937">
    <property type="entry name" value="PCRF"/>
    <property type="match status" value="1"/>
</dbReference>
<dbReference type="SUPFAM" id="SSF75620">
    <property type="entry name" value="Release factor"/>
    <property type="match status" value="1"/>
</dbReference>
<dbReference type="PROSITE" id="PS00745">
    <property type="entry name" value="RF_PROK_I"/>
    <property type="match status" value="1"/>
</dbReference>
<evidence type="ECO:0000255" key="1">
    <source>
        <dbReference type="HAMAP-Rule" id="MF_00093"/>
    </source>
</evidence>
<evidence type="ECO:0000256" key="2">
    <source>
        <dbReference type="SAM" id="MobiDB-lite"/>
    </source>
</evidence>
<reference key="1">
    <citation type="submission" date="2007-09" db="EMBL/GenBank/DDBJ databases">
        <title>Complete genome sequence of Rickettsia canadensis.</title>
        <authorList>
            <person name="Madan A."/>
            <person name="Fahey J."/>
            <person name="Helton E."/>
            <person name="Ketteman M."/>
            <person name="Madan A."/>
            <person name="Rodrigues S."/>
            <person name="Sanchez A."/>
            <person name="Whiting M."/>
            <person name="Dasch G."/>
            <person name="Eremeeva M."/>
        </authorList>
    </citation>
    <scope>NUCLEOTIDE SEQUENCE [LARGE SCALE GENOMIC DNA]</scope>
    <source>
        <strain>McKiel</strain>
    </source>
</reference>